<gene>
    <name evidence="1" type="primary">miaB</name>
    <name type="ordered locus">ZMO0077</name>
</gene>
<comment type="function">
    <text evidence="1">Catalyzes the methylthiolation of N6-(dimethylallyl)adenosine (i(6)A), leading to the formation of 2-methylthio-N6-(dimethylallyl)adenosine (ms(2)i(6)A) at position 37 in tRNAs that read codons beginning with uridine.</text>
</comment>
<comment type="catalytic activity">
    <reaction evidence="1">
        <text>N(6)-dimethylallyladenosine(37) in tRNA + (sulfur carrier)-SH + AH2 + 2 S-adenosyl-L-methionine = 2-methylsulfanyl-N(6)-dimethylallyladenosine(37) in tRNA + (sulfur carrier)-H + 5'-deoxyadenosine + L-methionine + A + S-adenosyl-L-homocysteine + 2 H(+)</text>
        <dbReference type="Rhea" id="RHEA:37067"/>
        <dbReference type="Rhea" id="RHEA-COMP:10375"/>
        <dbReference type="Rhea" id="RHEA-COMP:10376"/>
        <dbReference type="Rhea" id="RHEA-COMP:14737"/>
        <dbReference type="Rhea" id="RHEA-COMP:14739"/>
        <dbReference type="ChEBI" id="CHEBI:13193"/>
        <dbReference type="ChEBI" id="CHEBI:15378"/>
        <dbReference type="ChEBI" id="CHEBI:17319"/>
        <dbReference type="ChEBI" id="CHEBI:17499"/>
        <dbReference type="ChEBI" id="CHEBI:29917"/>
        <dbReference type="ChEBI" id="CHEBI:57844"/>
        <dbReference type="ChEBI" id="CHEBI:57856"/>
        <dbReference type="ChEBI" id="CHEBI:59789"/>
        <dbReference type="ChEBI" id="CHEBI:64428"/>
        <dbReference type="ChEBI" id="CHEBI:74415"/>
        <dbReference type="ChEBI" id="CHEBI:74417"/>
        <dbReference type="EC" id="2.8.4.3"/>
    </reaction>
</comment>
<comment type="cofactor">
    <cofactor evidence="1">
        <name>[4Fe-4S] cluster</name>
        <dbReference type="ChEBI" id="CHEBI:49883"/>
    </cofactor>
    <text evidence="1">Binds 2 [4Fe-4S] clusters. One cluster is coordinated with 3 cysteines and an exchangeable S-adenosyl-L-methionine.</text>
</comment>
<comment type="subunit">
    <text evidence="1">Monomer.</text>
</comment>
<comment type="subcellular location">
    <subcellularLocation>
        <location evidence="1">Cytoplasm</location>
    </subcellularLocation>
</comment>
<comment type="similarity">
    <text evidence="1">Belongs to the methylthiotransferase family. MiaB subfamily.</text>
</comment>
<feature type="chain" id="PRO_0000374664" description="tRNA-2-methylthio-N(6)-dimethylallyladenosine synthase">
    <location>
        <begin position="1"/>
        <end position="445"/>
    </location>
</feature>
<feature type="domain" description="MTTase N-terminal" evidence="1">
    <location>
        <begin position="7"/>
        <end position="121"/>
    </location>
</feature>
<feature type="domain" description="Radical SAM core" evidence="2">
    <location>
        <begin position="142"/>
        <end position="374"/>
    </location>
</feature>
<feature type="domain" description="TRAM" evidence="1">
    <location>
        <begin position="377"/>
        <end position="438"/>
    </location>
</feature>
<feature type="binding site" evidence="1">
    <location>
        <position position="16"/>
    </location>
    <ligand>
        <name>[4Fe-4S] cluster</name>
        <dbReference type="ChEBI" id="CHEBI:49883"/>
        <label>1</label>
    </ligand>
</feature>
<feature type="binding site" evidence="1">
    <location>
        <position position="52"/>
    </location>
    <ligand>
        <name>[4Fe-4S] cluster</name>
        <dbReference type="ChEBI" id="CHEBI:49883"/>
        <label>1</label>
    </ligand>
</feature>
<feature type="binding site" evidence="1">
    <location>
        <position position="84"/>
    </location>
    <ligand>
        <name>[4Fe-4S] cluster</name>
        <dbReference type="ChEBI" id="CHEBI:49883"/>
        <label>1</label>
    </ligand>
</feature>
<feature type="binding site" evidence="1">
    <location>
        <position position="156"/>
    </location>
    <ligand>
        <name>[4Fe-4S] cluster</name>
        <dbReference type="ChEBI" id="CHEBI:49883"/>
        <label>2</label>
        <note>4Fe-4S-S-AdoMet</note>
    </ligand>
</feature>
<feature type="binding site" evidence="1">
    <location>
        <position position="160"/>
    </location>
    <ligand>
        <name>[4Fe-4S] cluster</name>
        <dbReference type="ChEBI" id="CHEBI:49883"/>
        <label>2</label>
        <note>4Fe-4S-S-AdoMet</note>
    </ligand>
</feature>
<feature type="binding site" evidence="1">
    <location>
        <position position="163"/>
    </location>
    <ligand>
        <name>[4Fe-4S] cluster</name>
        <dbReference type="ChEBI" id="CHEBI:49883"/>
        <label>2</label>
        <note>4Fe-4S-S-AdoMet</note>
    </ligand>
</feature>
<protein>
    <recommendedName>
        <fullName evidence="1">tRNA-2-methylthio-N(6)-dimethylallyladenosine synthase</fullName>
        <ecNumber evidence="1">2.8.4.3</ecNumber>
    </recommendedName>
    <alternativeName>
        <fullName evidence="1">(Dimethylallyl)adenosine tRNA methylthiotransferase MiaB</fullName>
    </alternativeName>
    <alternativeName>
        <fullName evidence="1">tRNA-i(6)A37 methylthiotransferase</fullName>
    </alternativeName>
</protein>
<name>MIAB_ZYMMO</name>
<organism>
    <name type="scientific">Zymomonas mobilis subsp. mobilis (strain ATCC 31821 / ZM4 / CP4)</name>
    <dbReference type="NCBI Taxonomy" id="264203"/>
    <lineage>
        <taxon>Bacteria</taxon>
        <taxon>Pseudomonadati</taxon>
        <taxon>Pseudomonadota</taxon>
        <taxon>Alphaproteobacteria</taxon>
        <taxon>Sphingomonadales</taxon>
        <taxon>Zymomonadaceae</taxon>
        <taxon>Zymomonas</taxon>
    </lineage>
</organism>
<accession>Q5NRF3</accession>
<sequence>MNRPSLKHFYIKSFGCQMNSYDGERMSELLESQGMKAAEEAATADLVVLNTCHIREKAAEKVYSEIGRLRRPDGSSPMIALAGCVAQAEGAEVLARTKMVDIVVGPQAYHHLPELIEKAASGKVVDIDMPLESKFDALPERRQVGASAFLTVQEGCDKFCTYCVVPYTRGAEVSRPWSRIVKEAHALVDKGAREITLLGQNVNAWTGEDEAGRSQGLDGLIRALAKIDGLERIRYTTSHPNDMTEGLIEAHGEIDKLMPFLHLPVQSGSNRILKAMNRAHTAESYLTLMNRLKEVRPDIALSGDFIVGFPGESEEDFQATLDLISEVGYSLAFSFAYSPRPGTPAADMDNQIDPEISRERLQRLQALLNQQQFDFNQQTIGRKATVLIERKGKKADQMIGKSPWLQSVIIEAPVAIGDLVEVTLTDAGPNSVKGQFLDQKQFATA</sequence>
<keyword id="KW-0004">4Fe-4S</keyword>
<keyword id="KW-0963">Cytoplasm</keyword>
<keyword id="KW-0408">Iron</keyword>
<keyword id="KW-0411">Iron-sulfur</keyword>
<keyword id="KW-0479">Metal-binding</keyword>
<keyword id="KW-1185">Reference proteome</keyword>
<keyword id="KW-0949">S-adenosyl-L-methionine</keyword>
<keyword id="KW-0808">Transferase</keyword>
<keyword id="KW-0819">tRNA processing</keyword>
<reference key="1">
    <citation type="journal article" date="2005" name="Nat. Biotechnol.">
        <title>The genome sequence of the ethanologenic bacterium Zymomonas mobilis ZM4.</title>
        <authorList>
            <person name="Seo J.-S."/>
            <person name="Chong H."/>
            <person name="Park H.S."/>
            <person name="Yoon K.-O."/>
            <person name="Jung C."/>
            <person name="Kim J.J."/>
            <person name="Hong J.H."/>
            <person name="Kim H."/>
            <person name="Kim J.-H."/>
            <person name="Kil J.-I."/>
            <person name="Park C.J."/>
            <person name="Oh H.-M."/>
            <person name="Lee J.-S."/>
            <person name="Jin S.-J."/>
            <person name="Um H.-W."/>
            <person name="Lee H.-J."/>
            <person name="Oh S.-J."/>
            <person name="Kim J.Y."/>
            <person name="Kang H.L."/>
            <person name="Lee S.Y."/>
            <person name="Lee K.J."/>
            <person name="Kang H.S."/>
        </authorList>
    </citation>
    <scope>NUCLEOTIDE SEQUENCE [LARGE SCALE GENOMIC DNA]</scope>
    <source>
        <strain>ATCC 31821 / ZM4 / CP4</strain>
    </source>
</reference>
<evidence type="ECO:0000255" key="1">
    <source>
        <dbReference type="HAMAP-Rule" id="MF_01864"/>
    </source>
</evidence>
<evidence type="ECO:0000255" key="2">
    <source>
        <dbReference type="PROSITE-ProRule" id="PRU01266"/>
    </source>
</evidence>
<dbReference type="EC" id="2.8.4.3" evidence="1"/>
<dbReference type="EMBL" id="AE008692">
    <property type="protein sequence ID" value="AAV88701.1"/>
    <property type="molecule type" value="Genomic_DNA"/>
</dbReference>
<dbReference type="RefSeq" id="WP_011240050.1">
    <property type="nucleotide sequence ID" value="NZ_CP035711.1"/>
</dbReference>
<dbReference type="SMR" id="Q5NRF3"/>
<dbReference type="STRING" id="264203.ZMO0077"/>
<dbReference type="GeneID" id="79904670"/>
<dbReference type="KEGG" id="zmo:ZMO0077"/>
<dbReference type="eggNOG" id="COG0621">
    <property type="taxonomic scope" value="Bacteria"/>
</dbReference>
<dbReference type="HOGENOM" id="CLU_018697_2_0_5"/>
<dbReference type="Proteomes" id="UP000001173">
    <property type="component" value="Chromosome"/>
</dbReference>
<dbReference type="GO" id="GO:0005829">
    <property type="term" value="C:cytosol"/>
    <property type="evidence" value="ECO:0007669"/>
    <property type="project" value="TreeGrafter"/>
</dbReference>
<dbReference type="GO" id="GO:0051539">
    <property type="term" value="F:4 iron, 4 sulfur cluster binding"/>
    <property type="evidence" value="ECO:0007669"/>
    <property type="project" value="UniProtKB-UniRule"/>
</dbReference>
<dbReference type="GO" id="GO:0046872">
    <property type="term" value="F:metal ion binding"/>
    <property type="evidence" value="ECO:0007669"/>
    <property type="project" value="UniProtKB-KW"/>
</dbReference>
<dbReference type="GO" id="GO:0035597">
    <property type="term" value="F:N6-isopentenyladenosine methylthiotransferase activity"/>
    <property type="evidence" value="ECO:0007669"/>
    <property type="project" value="TreeGrafter"/>
</dbReference>
<dbReference type="CDD" id="cd01335">
    <property type="entry name" value="Radical_SAM"/>
    <property type="match status" value="1"/>
</dbReference>
<dbReference type="FunFam" id="3.40.50.12160:FF:000003">
    <property type="entry name" value="CDK5 regulatory subunit-associated protein 1"/>
    <property type="match status" value="1"/>
</dbReference>
<dbReference type="FunFam" id="3.80.30.20:FF:000001">
    <property type="entry name" value="tRNA-2-methylthio-N(6)-dimethylallyladenosine synthase 2"/>
    <property type="match status" value="1"/>
</dbReference>
<dbReference type="Gene3D" id="3.40.50.12160">
    <property type="entry name" value="Methylthiotransferase, N-terminal domain"/>
    <property type="match status" value="1"/>
</dbReference>
<dbReference type="Gene3D" id="3.80.30.20">
    <property type="entry name" value="tm_1862 like domain"/>
    <property type="match status" value="1"/>
</dbReference>
<dbReference type="HAMAP" id="MF_01864">
    <property type="entry name" value="tRNA_metthiotr_MiaB"/>
    <property type="match status" value="1"/>
</dbReference>
<dbReference type="InterPro" id="IPR006638">
    <property type="entry name" value="Elp3/MiaA/NifB-like_rSAM"/>
</dbReference>
<dbReference type="InterPro" id="IPR005839">
    <property type="entry name" value="Methylthiotransferase"/>
</dbReference>
<dbReference type="InterPro" id="IPR020612">
    <property type="entry name" value="Methylthiotransferase_CS"/>
</dbReference>
<dbReference type="InterPro" id="IPR013848">
    <property type="entry name" value="Methylthiotransferase_N"/>
</dbReference>
<dbReference type="InterPro" id="IPR038135">
    <property type="entry name" value="Methylthiotransferase_N_sf"/>
</dbReference>
<dbReference type="InterPro" id="IPR006463">
    <property type="entry name" value="MiaB_methiolase"/>
</dbReference>
<dbReference type="InterPro" id="IPR007197">
    <property type="entry name" value="rSAM"/>
</dbReference>
<dbReference type="InterPro" id="IPR023404">
    <property type="entry name" value="rSAM_horseshoe"/>
</dbReference>
<dbReference type="InterPro" id="IPR002792">
    <property type="entry name" value="TRAM_dom"/>
</dbReference>
<dbReference type="NCBIfam" id="TIGR01574">
    <property type="entry name" value="miaB-methiolase"/>
    <property type="match status" value="1"/>
</dbReference>
<dbReference type="NCBIfam" id="TIGR00089">
    <property type="entry name" value="MiaB/RimO family radical SAM methylthiotransferase"/>
    <property type="match status" value="1"/>
</dbReference>
<dbReference type="PANTHER" id="PTHR43020">
    <property type="entry name" value="CDK5 REGULATORY SUBUNIT-ASSOCIATED PROTEIN 1"/>
    <property type="match status" value="1"/>
</dbReference>
<dbReference type="PANTHER" id="PTHR43020:SF2">
    <property type="entry name" value="MITOCHONDRIAL TRNA METHYLTHIOTRANSFERASE CDK5RAP1"/>
    <property type="match status" value="1"/>
</dbReference>
<dbReference type="Pfam" id="PF04055">
    <property type="entry name" value="Radical_SAM"/>
    <property type="match status" value="1"/>
</dbReference>
<dbReference type="Pfam" id="PF01938">
    <property type="entry name" value="TRAM"/>
    <property type="match status" value="1"/>
</dbReference>
<dbReference type="Pfam" id="PF00919">
    <property type="entry name" value="UPF0004"/>
    <property type="match status" value="1"/>
</dbReference>
<dbReference type="SFLD" id="SFLDF00273">
    <property type="entry name" value="(dimethylallyl)adenosine_tRNA"/>
    <property type="match status" value="1"/>
</dbReference>
<dbReference type="SFLD" id="SFLDG01082">
    <property type="entry name" value="B12-binding_domain_containing"/>
    <property type="match status" value="1"/>
</dbReference>
<dbReference type="SFLD" id="SFLDG01061">
    <property type="entry name" value="methylthiotransferase"/>
    <property type="match status" value="1"/>
</dbReference>
<dbReference type="SMART" id="SM00729">
    <property type="entry name" value="Elp3"/>
    <property type="match status" value="1"/>
</dbReference>
<dbReference type="SUPFAM" id="SSF102114">
    <property type="entry name" value="Radical SAM enzymes"/>
    <property type="match status" value="1"/>
</dbReference>
<dbReference type="PROSITE" id="PS51449">
    <property type="entry name" value="MTTASE_N"/>
    <property type="match status" value="1"/>
</dbReference>
<dbReference type="PROSITE" id="PS01278">
    <property type="entry name" value="MTTASE_RADICAL"/>
    <property type="match status" value="1"/>
</dbReference>
<dbReference type="PROSITE" id="PS51918">
    <property type="entry name" value="RADICAL_SAM"/>
    <property type="match status" value="1"/>
</dbReference>
<dbReference type="PROSITE" id="PS50926">
    <property type="entry name" value="TRAM"/>
    <property type="match status" value="1"/>
</dbReference>
<proteinExistence type="inferred from homology"/>